<organism>
    <name type="scientific">Nostoc sp. (strain PCC 7120 / SAG 25.82 / UTEX 2576)</name>
    <dbReference type="NCBI Taxonomy" id="103690"/>
    <lineage>
        <taxon>Bacteria</taxon>
        <taxon>Bacillati</taxon>
        <taxon>Cyanobacteriota</taxon>
        <taxon>Cyanophyceae</taxon>
        <taxon>Nostocales</taxon>
        <taxon>Nostocaceae</taxon>
        <taxon>Nostoc</taxon>
    </lineage>
</organism>
<geneLocation type="plasmid">
    <name>pCC7120beta</name>
</geneLocation>
<comment type="function">
    <text evidence="1">Probable DNA motor protein. May track DNA in a ATP-dependent manner by generating positive supercoils in front of it and negative supercoils behind it (By similarity).</text>
</comment>
<comment type="miscellaneous">
    <text>Although strongly related to FtsK, it lacks the typical transmembrane domains located at the N-terminal part of FtsK.</text>
</comment>
<comment type="similarity">
    <text evidence="3">Belongs to the FtsK/SpoIIIE/SftA family.</text>
</comment>
<gene>
    <name type="ordered locus">all7666</name>
</gene>
<reference key="1">
    <citation type="journal article" date="2001" name="DNA Res.">
        <title>Complete genomic sequence of the filamentous nitrogen-fixing cyanobacterium Anabaena sp. strain PCC 7120.</title>
        <authorList>
            <person name="Kaneko T."/>
            <person name="Nakamura Y."/>
            <person name="Wolk C.P."/>
            <person name="Kuritz T."/>
            <person name="Sasamoto S."/>
            <person name="Watanabe A."/>
            <person name="Iriguchi M."/>
            <person name="Ishikawa A."/>
            <person name="Kawashima K."/>
            <person name="Kimura T."/>
            <person name="Kishida Y."/>
            <person name="Kohara M."/>
            <person name="Matsumoto M."/>
            <person name="Matsuno A."/>
            <person name="Muraki A."/>
            <person name="Nakazaki N."/>
            <person name="Shimpo S."/>
            <person name="Sugimoto M."/>
            <person name="Takazawa M."/>
            <person name="Yamada M."/>
            <person name="Yasuda M."/>
            <person name="Tabata S."/>
        </authorList>
    </citation>
    <scope>NUCLEOTIDE SEQUENCE [LARGE SCALE GENOMIC DNA]</scope>
    <source>
        <strain>PCC 7120 / SAG 25.82 / UTEX 2576</strain>
    </source>
</reference>
<keyword id="KW-0067">ATP-binding</keyword>
<keyword id="KW-0238">DNA-binding</keyword>
<keyword id="KW-0547">Nucleotide-binding</keyword>
<keyword id="KW-0614">Plasmid</keyword>
<keyword id="KW-1185">Reference proteome</keyword>
<feature type="chain" id="PRO_0000098324" description="Uncharacterized FtsK-like protein all7666">
    <location>
        <begin position="1"/>
        <end position="725"/>
    </location>
</feature>
<feature type="domain" description="FtsK" evidence="2">
    <location>
        <begin position="363"/>
        <end position="556"/>
    </location>
</feature>
<feature type="binding site" evidence="2">
    <location>
        <begin position="382"/>
        <end position="389"/>
    </location>
    <ligand>
        <name>ATP</name>
        <dbReference type="ChEBI" id="CHEBI:30616"/>
    </ligand>
</feature>
<proteinExistence type="inferred from homology"/>
<name>FTSKL_NOSS1</name>
<accession>Q8ZS46</accession>
<sequence>MLEMYINNNNTEFQKQQLWTAIVQAKQDGLSNEEIIENVQEALPDAMVFYAETVLKQIDFRAKLSRPVVEFNLEFLFQVIYESVIAGTNDNEILSICAEHCTLNQYEFVRYALEYIHLHRMPSQWEQNNVYQKMIEIVSSSPIESLFEYIESIKNIYLKQIGYELVQENLYNLLLNNKPISYFTDLANQSKDKFIKNYCCRTAVLVARATGKPLDLKVTGDGSIILKETKYLNSEIANNGIVSSNILTMGQAGKLLVDTLEDFNINAKYVDAKNGPTFNRIRVKLERGVSYKKVEDIGNDLVQQLGEELGLKVAPMVSVVPGGVVFDIPRLDRQFAYFRDYFSFDGEPDIYSVSIPGGVDVDGTYVEIPLYSDNVTHILGGGRTRGGKSQFEKAAILYLVRRYPPSVVRLALSDVKRVTFGKFDGLPHLVAPVARDAESTANLLDYLVEEMELRYQEFERHSSIETIAQYNSRFAPDCIMPRVICLIDECFDLLSDDNYCDRIETALMKLLAKAGGAGIHVLLYTQRPDKNVIDPLIRSNFPAKTAFVTTRPEDSCIILGDDKDKRAVYLLGYGDFLYKTTEVLRLQALYVADDEDPEYFQQLLLEAKNQNDPYTAWKSGLDFDEFVASLYDESSSNDNGKFKATTATKTKQSKTDFEGSFSFKVQLDEEARNSIMNLHQKGYQLDEIVKAVFNLSRQDGRSYKKFRNVVEEFLNNFKGGGEDDI</sequence>
<protein>
    <recommendedName>
        <fullName>Uncharacterized FtsK-like protein all7666</fullName>
    </recommendedName>
</protein>
<dbReference type="EMBL" id="AP003602">
    <property type="protein sequence ID" value="BAB77309.1"/>
    <property type="molecule type" value="Genomic_DNA"/>
</dbReference>
<dbReference type="PIR" id="AG2547">
    <property type="entry name" value="AG2547"/>
</dbReference>
<dbReference type="RefSeq" id="WP_010993994.1">
    <property type="nucleotide sequence ID" value="NZ_RSCN01000012.1"/>
</dbReference>
<dbReference type="SMR" id="Q8ZS46"/>
<dbReference type="KEGG" id="ana:all7666"/>
<dbReference type="OrthoDB" id="9807790at2"/>
<dbReference type="Proteomes" id="UP000002483">
    <property type="component" value="Plasmid pCC7120beta"/>
</dbReference>
<dbReference type="GO" id="GO:0005524">
    <property type="term" value="F:ATP binding"/>
    <property type="evidence" value="ECO:0007669"/>
    <property type="project" value="UniProtKB-KW"/>
</dbReference>
<dbReference type="GO" id="GO:0003677">
    <property type="term" value="F:DNA binding"/>
    <property type="evidence" value="ECO:0007669"/>
    <property type="project" value="UniProtKB-KW"/>
</dbReference>
<dbReference type="Gene3D" id="3.30.980.40">
    <property type="match status" value="1"/>
</dbReference>
<dbReference type="Gene3D" id="3.40.50.300">
    <property type="entry name" value="P-loop containing nucleotide triphosphate hydrolases"/>
    <property type="match status" value="1"/>
</dbReference>
<dbReference type="InterPro" id="IPR050206">
    <property type="entry name" value="FtsK/SpoIIIE/SftA"/>
</dbReference>
<dbReference type="InterPro" id="IPR041027">
    <property type="entry name" value="FtsK_alpha"/>
</dbReference>
<dbReference type="InterPro" id="IPR002543">
    <property type="entry name" value="FtsK_dom"/>
</dbReference>
<dbReference type="InterPro" id="IPR027417">
    <property type="entry name" value="P-loop_NTPase"/>
</dbReference>
<dbReference type="PANTHER" id="PTHR22683:SF41">
    <property type="entry name" value="DNA TRANSLOCASE FTSK"/>
    <property type="match status" value="1"/>
</dbReference>
<dbReference type="PANTHER" id="PTHR22683">
    <property type="entry name" value="SPORULATION PROTEIN RELATED"/>
    <property type="match status" value="1"/>
</dbReference>
<dbReference type="Pfam" id="PF17854">
    <property type="entry name" value="FtsK_alpha"/>
    <property type="match status" value="1"/>
</dbReference>
<dbReference type="Pfam" id="PF01580">
    <property type="entry name" value="FtsK_SpoIIIE"/>
    <property type="match status" value="1"/>
</dbReference>
<dbReference type="SUPFAM" id="SSF52540">
    <property type="entry name" value="P-loop containing nucleoside triphosphate hydrolases"/>
    <property type="match status" value="1"/>
</dbReference>
<dbReference type="PROSITE" id="PS50901">
    <property type="entry name" value="FTSK"/>
    <property type="match status" value="1"/>
</dbReference>
<evidence type="ECO:0000250" key="1"/>
<evidence type="ECO:0000255" key="2">
    <source>
        <dbReference type="PROSITE-ProRule" id="PRU00289"/>
    </source>
</evidence>
<evidence type="ECO:0000305" key="3"/>